<organism>
    <name type="scientific">Burkholderia cenocepacia (strain HI2424)</name>
    <dbReference type="NCBI Taxonomy" id="331272"/>
    <lineage>
        <taxon>Bacteria</taxon>
        <taxon>Pseudomonadati</taxon>
        <taxon>Pseudomonadota</taxon>
        <taxon>Betaproteobacteria</taxon>
        <taxon>Burkholderiales</taxon>
        <taxon>Burkholderiaceae</taxon>
        <taxon>Burkholderia</taxon>
        <taxon>Burkholderia cepacia complex</taxon>
    </lineage>
</organism>
<keyword id="KW-0963">Cytoplasm</keyword>
<keyword id="KW-0255">Endonuclease</keyword>
<keyword id="KW-0378">Hydrolase</keyword>
<keyword id="KW-0464">Manganese</keyword>
<keyword id="KW-0479">Metal-binding</keyword>
<keyword id="KW-0540">Nuclease</keyword>
<feature type="chain" id="PRO_1000031122" description="Ribonuclease HII">
    <location>
        <begin position="1"/>
        <end position="214"/>
    </location>
</feature>
<feature type="domain" description="RNase H type-2" evidence="2">
    <location>
        <begin position="26"/>
        <end position="214"/>
    </location>
</feature>
<feature type="binding site" evidence="1">
    <location>
        <position position="32"/>
    </location>
    <ligand>
        <name>a divalent metal cation</name>
        <dbReference type="ChEBI" id="CHEBI:60240"/>
    </ligand>
</feature>
<feature type="binding site" evidence="1">
    <location>
        <position position="33"/>
    </location>
    <ligand>
        <name>a divalent metal cation</name>
        <dbReference type="ChEBI" id="CHEBI:60240"/>
    </ligand>
</feature>
<feature type="binding site" evidence="1">
    <location>
        <position position="124"/>
    </location>
    <ligand>
        <name>a divalent metal cation</name>
        <dbReference type="ChEBI" id="CHEBI:60240"/>
    </ligand>
</feature>
<dbReference type="EC" id="3.1.26.4" evidence="1"/>
<dbReference type="EMBL" id="CP000458">
    <property type="protein sequence ID" value="ABK08756.1"/>
    <property type="molecule type" value="Genomic_DNA"/>
</dbReference>
<dbReference type="RefSeq" id="WP_011549547.1">
    <property type="nucleotide sequence ID" value="NC_008542.1"/>
</dbReference>
<dbReference type="SMR" id="A0K8C9"/>
<dbReference type="KEGG" id="bch:Bcen2424_2005"/>
<dbReference type="HOGENOM" id="CLU_036532_3_2_4"/>
<dbReference type="GO" id="GO:0005737">
    <property type="term" value="C:cytoplasm"/>
    <property type="evidence" value="ECO:0007669"/>
    <property type="project" value="UniProtKB-SubCell"/>
</dbReference>
<dbReference type="GO" id="GO:0032299">
    <property type="term" value="C:ribonuclease H2 complex"/>
    <property type="evidence" value="ECO:0007669"/>
    <property type="project" value="TreeGrafter"/>
</dbReference>
<dbReference type="GO" id="GO:0030145">
    <property type="term" value="F:manganese ion binding"/>
    <property type="evidence" value="ECO:0007669"/>
    <property type="project" value="UniProtKB-UniRule"/>
</dbReference>
<dbReference type="GO" id="GO:0003723">
    <property type="term" value="F:RNA binding"/>
    <property type="evidence" value="ECO:0007669"/>
    <property type="project" value="InterPro"/>
</dbReference>
<dbReference type="GO" id="GO:0004523">
    <property type="term" value="F:RNA-DNA hybrid ribonuclease activity"/>
    <property type="evidence" value="ECO:0007669"/>
    <property type="project" value="UniProtKB-UniRule"/>
</dbReference>
<dbReference type="GO" id="GO:0043137">
    <property type="term" value="P:DNA replication, removal of RNA primer"/>
    <property type="evidence" value="ECO:0007669"/>
    <property type="project" value="TreeGrafter"/>
</dbReference>
<dbReference type="GO" id="GO:0006298">
    <property type="term" value="P:mismatch repair"/>
    <property type="evidence" value="ECO:0007669"/>
    <property type="project" value="TreeGrafter"/>
</dbReference>
<dbReference type="CDD" id="cd07182">
    <property type="entry name" value="RNase_HII_bacteria_HII_like"/>
    <property type="match status" value="1"/>
</dbReference>
<dbReference type="FunFam" id="3.30.420.10:FF:000006">
    <property type="entry name" value="Ribonuclease HII"/>
    <property type="match status" value="1"/>
</dbReference>
<dbReference type="Gene3D" id="3.30.420.10">
    <property type="entry name" value="Ribonuclease H-like superfamily/Ribonuclease H"/>
    <property type="match status" value="1"/>
</dbReference>
<dbReference type="HAMAP" id="MF_00052_B">
    <property type="entry name" value="RNase_HII_B"/>
    <property type="match status" value="1"/>
</dbReference>
<dbReference type="InterPro" id="IPR022898">
    <property type="entry name" value="RNase_HII"/>
</dbReference>
<dbReference type="InterPro" id="IPR001352">
    <property type="entry name" value="RNase_HII/HIII"/>
</dbReference>
<dbReference type="InterPro" id="IPR024567">
    <property type="entry name" value="RNase_HII/HIII_dom"/>
</dbReference>
<dbReference type="InterPro" id="IPR012337">
    <property type="entry name" value="RNaseH-like_sf"/>
</dbReference>
<dbReference type="InterPro" id="IPR036397">
    <property type="entry name" value="RNaseH_sf"/>
</dbReference>
<dbReference type="NCBIfam" id="NF000595">
    <property type="entry name" value="PRK00015.1-3"/>
    <property type="match status" value="1"/>
</dbReference>
<dbReference type="NCBIfam" id="NF000596">
    <property type="entry name" value="PRK00015.1-4"/>
    <property type="match status" value="1"/>
</dbReference>
<dbReference type="PANTHER" id="PTHR10954">
    <property type="entry name" value="RIBONUCLEASE H2 SUBUNIT A"/>
    <property type="match status" value="1"/>
</dbReference>
<dbReference type="PANTHER" id="PTHR10954:SF18">
    <property type="entry name" value="RIBONUCLEASE HII"/>
    <property type="match status" value="1"/>
</dbReference>
<dbReference type="Pfam" id="PF01351">
    <property type="entry name" value="RNase_HII"/>
    <property type="match status" value="1"/>
</dbReference>
<dbReference type="SUPFAM" id="SSF53098">
    <property type="entry name" value="Ribonuclease H-like"/>
    <property type="match status" value="1"/>
</dbReference>
<dbReference type="PROSITE" id="PS51975">
    <property type="entry name" value="RNASE_H_2"/>
    <property type="match status" value="1"/>
</dbReference>
<evidence type="ECO:0000255" key="1">
    <source>
        <dbReference type="HAMAP-Rule" id="MF_00052"/>
    </source>
</evidence>
<evidence type="ECO:0000255" key="2">
    <source>
        <dbReference type="PROSITE-ProRule" id="PRU01319"/>
    </source>
</evidence>
<reference key="1">
    <citation type="submission" date="2006-08" db="EMBL/GenBank/DDBJ databases">
        <title>Complete sequence of chromosome 1 of Burkholderia cenocepacia HI2424.</title>
        <authorList>
            <person name="Copeland A."/>
            <person name="Lucas S."/>
            <person name="Lapidus A."/>
            <person name="Barry K."/>
            <person name="Detter J.C."/>
            <person name="Glavina del Rio T."/>
            <person name="Hammon N."/>
            <person name="Israni S."/>
            <person name="Pitluck S."/>
            <person name="Chain P."/>
            <person name="Malfatti S."/>
            <person name="Shin M."/>
            <person name="Vergez L."/>
            <person name="Schmutz J."/>
            <person name="Larimer F."/>
            <person name="Land M."/>
            <person name="Hauser L."/>
            <person name="Kyrpides N."/>
            <person name="Kim E."/>
            <person name="LiPuma J.J."/>
            <person name="Gonzalez C.F."/>
            <person name="Konstantinidis K."/>
            <person name="Tiedje J.M."/>
            <person name="Richardson P."/>
        </authorList>
    </citation>
    <scope>NUCLEOTIDE SEQUENCE [LARGE SCALE GENOMIC DNA]</scope>
    <source>
        <strain>HI2424</strain>
    </source>
</reference>
<name>RNH2_BURCH</name>
<comment type="function">
    <text evidence="1">Endonuclease that specifically degrades the RNA of RNA-DNA hybrids.</text>
</comment>
<comment type="catalytic activity">
    <reaction evidence="1">
        <text>Endonucleolytic cleavage to 5'-phosphomonoester.</text>
        <dbReference type="EC" id="3.1.26.4"/>
    </reaction>
</comment>
<comment type="cofactor">
    <cofactor evidence="1">
        <name>Mn(2+)</name>
        <dbReference type="ChEBI" id="CHEBI:29035"/>
    </cofactor>
    <cofactor evidence="1">
        <name>Mg(2+)</name>
        <dbReference type="ChEBI" id="CHEBI:18420"/>
    </cofactor>
    <text evidence="1">Manganese or magnesium. Binds 1 divalent metal ion per monomer in the absence of substrate. May bind a second metal ion after substrate binding.</text>
</comment>
<comment type="subcellular location">
    <subcellularLocation>
        <location evidence="1">Cytoplasm</location>
    </subcellularLocation>
</comment>
<comment type="similarity">
    <text evidence="1">Belongs to the RNase HII family.</text>
</comment>
<protein>
    <recommendedName>
        <fullName evidence="1">Ribonuclease HII</fullName>
        <shortName evidence="1">RNase HII</shortName>
        <ecNumber evidence="1">3.1.26.4</ecNumber>
    </recommendedName>
</protein>
<proteinExistence type="inferred from homology"/>
<sequence>MTAIRAPRRRASSDVQGGFDFSRPDEIVCGVDEAGRGPLAGPVVAAAVILDPAQPIDGLDDSKVLSAKKRDALYDLIVTRSHAYCVASASVDEIDTLNILHATMLAMKRAVEGLSVLPTLAQIDGNRCPTLSVRAEAIVSGDALVPSISAASILAKVTRDRMLVDLHERFPVYGFNVHAGYGTAKHLAALREHGPCEAHRRSFAPVRAALDLIR</sequence>
<gene>
    <name evidence="1" type="primary">rnhB</name>
    <name type="ordered locus">Bcen2424_2005</name>
</gene>
<accession>A0K8C9</accession>